<sequence>MSLGTEEKQNLINTHQVHPTDTGSAEVQVAMLTTRISKLSTHLQGNIHDFSSRQGLLKMIGQRKRLLGYVRSKSEKRYTELIEKLAIRG</sequence>
<protein>
    <recommendedName>
        <fullName evidence="1">Small ribosomal subunit protein uS15</fullName>
    </recommendedName>
    <alternativeName>
        <fullName evidence="3">30S ribosomal protein S15</fullName>
    </alternativeName>
</protein>
<keyword id="KW-1185">Reference proteome</keyword>
<keyword id="KW-0687">Ribonucleoprotein</keyword>
<keyword id="KW-0689">Ribosomal protein</keyword>
<keyword id="KW-0694">RNA-binding</keyword>
<keyword id="KW-0699">rRNA-binding</keyword>
<reference key="1">
    <citation type="journal article" date="2007" name="PLoS Genet.">
        <title>Patterns and implications of gene gain and loss in the evolution of Prochlorococcus.</title>
        <authorList>
            <person name="Kettler G.C."/>
            <person name="Martiny A.C."/>
            <person name="Huang K."/>
            <person name="Zucker J."/>
            <person name="Coleman M.L."/>
            <person name="Rodrigue S."/>
            <person name="Chen F."/>
            <person name="Lapidus A."/>
            <person name="Ferriera S."/>
            <person name="Johnson J."/>
            <person name="Steglich C."/>
            <person name="Church G.M."/>
            <person name="Richardson P."/>
            <person name="Chisholm S.W."/>
        </authorList>
    </citation>
    <scope>NUCLEOTIDE SEQUENCE [LARGE SCALE GENOMIC DNA]</scope>
    <source>
        <strain>NATL2A</strain>
    </source>
</reference>
<comment type="function">
    <text evidence="1">One of the primary rRNA binding proteins, it binds directly to 16S rRNA where it helps nucleate assembly of the platform of the 30S subunit by binding and bridging several RNA helices of the 16S rRNA.</text>
</comment>
<comment type="function">
    <text evidence="1">Forms an intersubunit bridge (bridge B4) with the 23S rRNA of the 50S subunit in the ribosome.</text>
</comment>
<comment type="subunit">
    <text evidence="1">Part of the 30S ribosomal subunit. Forms a bridge to the 50S subunit in the 70S ribosome, contacting the 23S rRNA.</text>
</comment>
<comment type="similarity">
    <text evidence="1">Belongs to the universal ribosomal protein uS15 family.</text>
</comment>
<organism>
    <name type="scientific">Prochlorococcus marinus (strain NATL2A)</name>
    <dbReference type="NCBI Taxonomy" id="59920"/>
    <lineage>
        <taxon>Bacteria</taxon>
        <taxon>Bacillati</taxon>
        <taxon>Cyanobacteriota</taxon>
        <taxon>Cyanophyceae</taxon>
        <taxon>Synechococcales</taxon>
        <taxon>Prochlorococcaceae</taxon>
        <taxon>Prochlorococcus</taxon>
    </lineage>
</organism>
<dbReference type="EMBL" id="CP000095">
    <property type="protein sequence ID" value="AAZ57759.1"/>
    <property type="molecule type" value="Genomic_DNA"/>
</dbReference>
<dbReference type="RefSeq" id="WP_011293801.1">
    <property type="nucleotide sequence ID" value="NC_007335.2"/>
</dbReference>
<dbReference type="SMR" id="Q46L69"/>
<dbReference type="STRING" id="59920.PMN2A_0267"/>
<dbReference type="KEGG" id="pmn:PMN2A_0267"/>
<dbReference type="HOGENOM" id="CLU_148518_0_0_3"/>
<dbReference type="OrthoDB" id="9799262at2"/>
<dbReference type="PhylomeDB" id="Q46L69"/>
<dbReference type="Proteomes" id="UP000002535">
    <property type="component" value="Chromosome"/>
</dbReference>
<dbReference type="GO" id="GO:0022627">
    <property type="term" value="C:cytosolic small ribosomal subunit"/>
    <property type="evidence" value="ECO:0007669"/>
    <property type="project" value="TreeGrafter"/>
</dbReference>
<dbReference type="GO" id="GO:0019843">
    <property type="term" value="F:rRNA binding"/>
    <property type="evidence" value="ECO:0007669"/>
    <property type="project" value="UniProtKB-UniRule"/>
</dbReference>
<dbReference type="GO" id="GO:0003735">
    <property type="term" value="F:structural constituent of ribosome"/>
    <property type="evidence" value="ECO:0007669"/>
    <property type="project" value="InterPro"/>
</dbReference>
<dbReference type="GO" id="GO:0006412">
    <property type="term" value="P:translation"/>
    <property type="evidence" value="ECO:0007669"/>
    <property type="project" value="UniProtKB-UniRule"/>
</dbReference>
<dbReference type="CDD" id="cd00353">
    <property type="entry name" value="Ribosomal_S15p_S13e"/>
    <property type="match status" value="1"/>
</dbReference>
<dbReference type="FunFam" id="1.10.287.10:FF:000002">
    <property type="entry name" value="30S ribosomal protein S15"/>
    <property type="match status" value="1"/>
</dbReference>
<dbReference type="Gene3D" id="6.10.250.3130">
    <property type="match status" value="1"/>
</dbReference>
<dbReference type="Gene3D" id="1.10.287.10">
    <property type="entry name" value="S15/NS1, RNA-binding"/>
    <property type="match status" value="1"/>
</dbReference>
<dbReference type="HAMAP" id="MF_01343_B">
    <property type="entry name" value="Ribosomal_uS15_B"/>
    <property type="match status" value="1"/>
</dbReference>
<dbReference type="InterPro" id="IPR000589">
    <property type="entry name" value="Ribosomal_uS15"/>
</dbReference>
<dbReference type="InterPro" id="IPR005290">
    <property type="entry name" value="Ribosomal_uS15_bac-type"/>
</dbReference>
<dbReference type="InterPro" id="IPR009068">
    <property type="entry name" value="uS15_NS1_RNA-bd_sf"/>
</dbReference>
<dbReference type="NCBIfam" id="TIGR00952">
    <property type="entry name" value="S15_bact"/>
    <property type="match status" value="1"/>
</dbReference>
<dbReference type="PANTHER" id="PTHR23321">
    <property type="entry name" value="RIBOSOMAL PROTEIN S15, BACTERIAL AND ORGANELLAR"/>
    <property type="match status" value="1"/>
</dbReference>
<dbReference type="PANTHER" id="PTHR23321:SF26">
    <property type="entry name" value="SMALL RIBOSOMAL SUBUNIT PROTEIN US15M"/>
    <property type="match status" value="1"/>
</dbReference>
<dbReference type="Pfam" id="PF00312">
    <property type="entry name" value="Ribosomal_S15"/>
    <property type="match status" value="1"/>
</dbReference>
<dbReference type="SMART" id="SM01387">
    <property type="entry name" value="Ribosomal_S15"/>
    <property type="match status" value="1"/>
</dbReference>
<dbReference type="SUPFAM" id="SSF47060">
    <property type="entry name" value="S15/NS1 RNA-binding domain"/>
    <property type="match status" value="1"/>
</dbReference>
<dbReference type="PROSITE" id="PS00362">
    <property type="entry name" value="RIBOSOMAL_S15"/>
    <property type="match status" value="1"/>
</dbReference>
<evidence type="ECO:0000255" key="1">
    <source>
        <dbReference type="HAMAP-Rule" id="MF_01343"/>
    </source>
</evidence>
<evidence type="ECO:0000256" key="2">
    <source>
        <dbReference type="SAM" id="MobiDB-lite"/>
    </source>
</evidence>
<evidence type="ECO:0000305" key="3"/>
<feature type="chain" id="PRO_0000115506" description="Small ribosomal subunit protein uS15">
    <location>
        <begin position="1"/>
        <end position="89"/>
    </location>
</feature>
<feature type="region of interest" description="Disordered" evidence="2">
    <location>
        <begin position="1"/>
        <end position="23"/>
    </location>
</feature>
<feature type="compositionally biased region" description="Polar residues" evidence="2">
    <location>
        <begin position="10"/>
        <end position="23"/>
    </location>
</feature>
<name>RS15_PROMT</name>
<proteinExistence type="inferred from homology"/>
<gene>
    <name evidence="1" type="primary">rpsO</name>
    <name evidence="1" type="synonym">rps15</name>
    <name type="ordered locus">PMN2A_0267</name>
</gene>
<accession>Q46L69</accession>